<reference key="1">
    <citation type="journal article" date="2009" name="PLoS Genet.">
        <title>Adaptations to submarine hydrothermal environments exemplified by the genome of Nautilia profundicola.</title>
        <authorList>
            <person name="Campbell B.J."/>
            <person name="Smith J.L."/>
            <person name="Hanson T.E."/>
            <person name="Klotz M.G."/>
            <person name="Stein L.Y."/>
            <person name="Lee C.K."/>
            <person name="Wu D."/>
            <person name="Robinson J.M."/>
            <person name="Khouri H.M."/>
            <person name="Eisen J.A."/>
            <person name="Cary S.C."/>
        </authorList>
    </citation>
    <scope>NUCLEOTIDE SEQUENCE [LARGE SCALE GENOMIC DNA]</scope>
    <source>
        <strain>ATCC BAA-1463 / DSM 18972 / AmH</strain>
    </source>
</reference>
<evidence type="ECO:0000255" key="1">
    <source>
        <dbReference type="HAMAP-Rule" id="MF_01445"/>
    </source>
</evidence>
<dbReference type="EC" id="2.3.1.234" evidence="1"/>
<dbReference type="EMBL" id="CP001279">
    <property type="protein sequence ID" value="ACM93314.1"/>
    <property type="molecule type" value="Genomic_DNA"/>
</dbReference>
<dbReference type="RefSeq" id="WP_015902366.1">
    <property type="nucleotide sequence ID" value="NC_012115.1"/>
</dbReference>
<dbReference type="SMR" id="B9L7R7"/>
<dbReference type="STRING" id="598659.NAMH_0251"/>
<dbReference type="KEGG" id="nam:NAMH_0251"/>
<dbReference type="eggNOG" id="COG0533">
    <property type="taxonomic scope" value="Bacteria"/>
</dbReference>
<dbReference type="HOGENOM" id="CLU_023208_0_3_7"/>
<dbReference type="OrthoDB" id="9806197at2"/>
<dbReference type="Proteomes" id="UP000000448">
    <property type="component" value="Chromosome"/>
</dbReference>
<dbReference type="GO" id="GO:0005737">
    <property type="term" value="C:cytoplasm"/>
    <property type="evidence" value="ECO:0007669"/>
    <property type="project" value="UniProtKB-SubCell"/>
</dbReference>
<dbReference type="GO" id="GO:0005506">
    <property type="term" value="F:iron ion binding"/>
    <property type="evidence" value="ECO:0007669"/>
    <property type="project" value="UniProtKB-UniRule"/>
</dbReference>
<dbReference type="GO" id="GO:0061711">
    <property type="term" value="F:N(6)-L-threonylcarbamoyladenine synthase activity"/>
    <property type="evidence" value="ECO:0007669"/>
    <property type="project" value="UniProtKB-EC"/>
</dbReference>
<dbReference type="GO" id="GO:0002949">
    <property type="term" value="P:tRNA threonylcarbamoyladenosine modification"/>
    <property type="evidence" value="ECO:0007669"/>
    <property type="project" value="UniProtKB-UniRule"/>
</dbReference>
<dbReference type="Gene3D" id="3.30.420.40">
    <property type="match status" value="2"/>
</dbReference>
<dbReference type="HAMAP" id="MF_01445">
    <property type="entry name" value="TsaD"/>
    <property type="match status" value="1"/>
</dbReference>
<dbReference type="InterPro" id="IPR043129">
    <property type="entry name" value="ATPase_NBD"/>
</dbReference>
<dbReference type="InterPro" id="IPR000905">
    <property type="entry name" value="Gcp-like_dom"/>
</dbReference>
<dbReference type="InterPro" id="IPR017861">
    <property type="entry name" value="KAE1/TsaD"/>
</dbReference>
<dbReference type="InterPro" id="IPR017860">
    <property type="entry name" value="Peptidase_M22_CS"/>
</dbReference>
<dbReference type="InterPro" id="IPR022450">
    <property type="entry name" value="TsaD"/>
</dbReference>
<dbReference type="NCBIfam" id="TIGR00329">
    <property type="entry name" value="gcp_kae1"/>
    <property type="match status" value="1"/>
</dbReference>
<dbReference type="NCBIfam" id="TIGR03723">
    <property type="entry name" value="T6A_TsaD_YgjD"/>
    <property type="match status" value="1"/>
</dbReference>
<dbReference type="PANTHER" id="PTHR11735">
    <property type="entry name" value="TRNA N6-ADENOSINE THREONYLCARBAMOYLTRANSFERASE"/>
    <property type="match status" value="1"/>
</dbReference>
<dbReference type="PANTHER" id="PTHR11735:SF6">
    <property type="entry name" value="TRNA N6-ADENOSINE THREONYLCARBAMOYLTRANSFERASE, MITOCHONDRIAL"/>
    <property type="match status" value="1"/>
</dbReference>
<dbReference type="Pfam" id="PF00814">
    <property type="entry name" value="TsaD"/>
    <property type="match status" value="1"/>
</dbReference>
<dbReference type="PRINTS" id="PR00789">
    <property type="entry name" value="OSIALOPTASE"/>
</dbReference>
<dbReference type="SUPFAM" id="SSF53067">
    <property type="entry name" value="Actin-like ATPase domain"/>
    <property type="match status" value="2"/>
</dbReference>
<dbReference type="PROSITE" id="PS01016">
    <property type="entry name" value="GLYCOPROTEASE"/>
    <property type="match status" value="1"/>
</dbReference>
<proteinExistence type="inferred from homology"/>
<keyword id="KW-0012">Acyltransferase</keyword>
<keyword id="KW-0963">Cytoplasm</keyword>
<keyword id="KW-0408">Iron</keyword>
<keyword id="KW-0479">Metal-binding</keyword>
<keyword id="KW-0808">Transferase</keyword>
<keyword id="KW-0819">tRNA processing</keyword>
<name>TSAD_NAUPA</name>
<protein>
    <recommendedName>
        <fullName evidence="1">tRNA N6-adenosine threonylcarbamoyltransferase</fullName>
        <ecNumber evidence="1">2.3.1.234</ecNumber>
    </recommendedName>
    <alternativeName>
        <fullName evidence="1">N6-L-threonylcarbamoyladenine synthase</fullName>
        <shortName evidence="1">t(6)A synthase</shortName>
    </alternativeName>
    <alternativeName>
        <fullName evidence="1">t(6)A37 threonylcarbamoyladenosine biosynthesis protein TsaD</fullName>
    </alternativeName>
    <alternativeName>
        <fullName evidence="1">tRNA threonylcarbamoyladenosine biosynthesis protein TsaD</fullName>
    </alternativeName>
</protein>
<accession>B9L7R7</accession>
<gene>
    <name evidence="1" type="primary">tsaD</name>
    <name type="synonym">gcp</name>
    <name type="ordered locus">NAMH_0251</name>
</gene>
<organism>
    <name type="scientific">Nautilia profundicola (strain ATCC BAA-1463 / DSM 18972 / AmH)</name>
    <dbReference type="NCBI Taxonomy" id="598659"/>
    <lineage>
        <taxon>Bacteria</taxon>
        <taxon>Pseudomonadati</taxon>
        <taxon>Campylobacterota</taxon>
        <taxon>Epsilonproteobacteria</taxon>
        <taxon>Nautiliales</taxon>
        <taxon>Nautiliaceae</taxon>
        <taxon>Nautilia</taxon>
    </lineage>
</organism>
<comment type="function">
    <text evidence="1">Required for the formation of a threonylcarbamoyl group on adenosine at position 37 (t(6)A37) in tRNAs that read codons beginning with adenine. Is involved in the transfer of the threonylcarbamoyl moiety of threonylcarbamoyl-AMP (TC-AMP) to the N6 group of A37, together with TsaE and TsaB. TsaD likely plays a direct catalytic role in this reaction.</text>
</comment>
<comment type="catalytic activity">
    <reaction evidence="1">
        <text>L-threonylcarbamoyladenylate + adenosine(37) in tRNA = N(6)-L-threonylcarbamoyladenosine(37) in tRNA + AMP + H(+)</text>
        <dbReference type="Rhea" id="RHEA:37059"/>
        <dbReference type="Rhea" id="RHEA-COMP:10162"/>
        <dbReference type="Rhea" id="RHEA-COMP:10163"/>
        <dbReference type="ChEBI" id="CHEBI:15378"/>
        <dbReference type="ChEBI" id="CHEBI:73682"/>
        <dbReference type="ChEBI" id="CHEBI:74411"/>
        <dbReference type="ChEBI" id="CHEBI:74418"/>
        <dbReference type="ChEBI" id="CHEBI:456215"/>
        <dbReference type="EC" id="2.3.1.234"/>
    </reaction>
</comment>
<comment type="cofactor">
    <cofactor evidence="1">
        <name>Fe(2+)</name>
        <dbReference type="ChEBI" id="CHEBI:29033"/>
    </cofactor>
    <text evidence="1">Binds 1 Fe(2+) ion per subunit.</text>
</comment>
<comment type="subcellular location">
    <subcellularLocation>
        <location evidence="1">Cytoplasm</location>
    </subcellularLocation>
</comment>
<comment type="similarity">
    <text evidence="1">Belongs to the KAE1 / TsaD family.</text>
</comment>
<feature type="chain" id="PRO_1000184973" description="tRNA N6-adenosine threonylcarbamoyltransferase">
    <location>
        <begin position="1"/>
        <end position="327"/>
    </location>
</feature>
<feature type="binding site" evidence="1">
    <location>
        <position position="107"/>
    </location>
    <ligand>
        <name>Fe cation</name>
        <dbReference type="ChEBI" id="CHEBI:24875"/>
    </ligand>
</feature>
<feature type="binding site" evidence="1">
    <location>
        <position position="111"/>
    </location>
    <ligand>
        <name>Fe cation</name>
        <dbReference type="ChEBI" id="CHEBI:24875"/>
    </ligand>
</feature>
<feature type="binding site" evidence="1">
    <location>
        <begin position="129"/>
        <end position="133"/>
    </location>
    <ligand>
        <name>substrate</name>
    </ligand>
</feature>
<feature type="binding site" evidence="1">
    <location>
        <position position="162"/>
    </location>
    <ligand>
        <name>substrate</name>
    </ligand>
</feature>
<feature type="binding site" evidence="1">
    <location>
        <position position="175"/>
    </location>
    <ligand>
        <name>substrate</name>
    </ligand>
</feature>
<feature type="binding site" evidence="1">
    <location>
        <position position="263"/>
    </location>
    <ligand>
        <name>substrate</name>
    </ligand>
</feature>
<feature type="binding site" evidence="1">
    <location>
        <position position="291"/>
    </location>
    <ligand>
        <name>Fe cation</name>
        <dbReference type="ChEBI" id="CHEBI:24875"/>
    </ligand>
</feature>
<sequence>MILSIESSCDDTSLAVMEIDSKKLLFHKKISQEIEHSVYGGVVPELASRLHAKALPKILEETKEYFPNLKAVAVTNAPGLSVTLQEGVMMAKALSIALNIPLIGVNHLVGHIYSLFIEKEEIKPMMVLLVSGGHTKILNFNGIESVCEIATTMDDSFGESFDKVAKMLGLGYPGGPVIENLAKKGSDIVPLPLPLRNSPEIAFSYSGIKNAVRLAIESGKYKPEDIAASFQNKAIEHLTFMCKRAIKKHKPENFAIVGGASANLKLREEFEKLSQKFGFKLLYPEMKFTSDNAAMIARAAVEMYKKGMFLNYKDIKIIPRVDFDKCH</sequence>